<protein>
    <recommendedName>
        <fullName evidence="2">Type II methyltransferase M2.MboI</fullName>
        <shortName evidence="2">M2.MboI</shortName>
        <ecNumber>2.1.1.72</ecNumber>
    </recommendedName>
    <alternativeName>
        <fullName>Adenine-specific methyltransferase MboIC</fullName>
    </alternativeName>
    <alternativeName>
        <fullName evidence="3">M.MboC</fullName>
    </alternativeName>
    <alternativeName>
        <fullName>Modification methylase MboIC</fullName>
        <shortName>M.MboIC</shortName>
    </alternativeName>
</protein>
<sequence length="273" mass="31923">MRIKPYFESDDKNFNIYQGNCIDFMSHFQDNSIDMIFADPPYFLSNDGLTFKNSIIQSVNKGEWDKNDNEASIYNFNHEWIAQARQLLKDNGTIWISGTHHNIFTVGQVLKENNFKILNIITWEKPNPPPNFSCRYFTYSSEWIIWARKHSKIPHYFNYDLMKKLNGDKQQKDIWRLPAVGSWEKTQGKHPTQKPLGLLSRIILSSTQKDDLILDPFSGSGTTGIAGVLLDRNYIGIEQELEFLELSKRRYHEITPVLKNEFKQKIRKQISAI</sequence>
<gene>
    <name type="primary">mboIBM</name>
    <name evidence="3" type="synonym">mboC</name>
</gene>
<dbReference type="EC" id="2.1.1.72"/>
<dbReference type="EMBL" id="D13968">
    <property type="protein sequence ID" value="BAA03073.1"/>
    <property type="molecule type" value="Genomic_DNA"/>
</dbReference>
<dbReference type="PIR" id="S35647">
    <property type="entry name" value="S35647"/>
</dbReference>
<dbReference type="RefSeq" id="WP_078274861.1">
    <property type="nucleotide sequence ID" value="NZ_CP030241.1"/>
</dbReference>
<dbReference type="SMR" id="P34721"/>
<dbReference type="STRING" id="476.B0182_10410"/>
<dbReference type="REBASE" id="203780">
    <property type="entry name" value="M2.Lbr1106ORF1748P"/>
</dbReference>
<dbReference type="REBASE" id="204727">
    <property type="entry name" value="M.Bso1395ORF3951P"/>
</dbReference>
<dbReference type="REBASE" id="205333">
    <property type="entry name" value="M.Bso1395ORF1173P"/>
</dbReference>
<dbReference type="REBASE" id="3668">
    <property type="entry name" value="M2.MboI"/>
</dbReference>
<dbReference type="GeneID" id="77189678"/>
<dbReference type="PRO" id="PR:P34721"/>
<dbReference type="GO" id="GO:0005737">
    <property type="term" value="C:cytoplasm"/>
    <property type="evidence" value="ECO:0007669"/>
    <property type="project" value="TreeGrafter"/>
</dbReference>
<dbReference type="GO" id="GO:0003677">
    <property type="term" value="F:DNA binding"/>
    <property type="evidence" value="ECO:0007669"/>
    <property type="project" value="UniProtKB-KW"/>
</dbReference>
<dbReference type="GO" id="GO:0008170">
    <property type="term" value="F:N-methyltransferase activity"/>
    <property type="evidence" value="ECO:0007669"/>
    <property type="project" value="InterPro"/>
</dbReference>
<dbReference type="GO" id="GO:0009007">
    <property type="term" value="F:site-specific DNA-methyltransferase (adenine-specific) activity"/>
    <property type="evidence" value="ECO:0007669"/>
    <property type="project" value="UniProtKB-EC"/>
</dbReference>
<dbReference type="GO" id="GO:0009307">
    <property type="term" value="P:DNA restriction-modification system"/>
    <property type="evidence" value="ECO:0007669"/>
    <property type="project" value="UniProtKB-KW"/>
</dbReference>
<dbReference type="GO" id="GO:0032259">
    <property type="term" value="P:methylation"/>
    <property type="evidence" value="ECO:0007669"/>
    <property type="project" value="UniProtKB-KW"/>
</dbReference>
<dbReference type="Gene3D" id="3.40.50.150">
    <property type="entry name" value="Vaccinia Virus protein VP39"/>
    <property type="match status" value="1"/>
</dbReference>
<dbReference type="InterPro" id="IPR002941">
    <property type="entry name" value="DNA_methylase_N4/N6"/>
</dbReference>
<dbReference type="InterPro" id="IPR002052">
    <property type="entry name" value="DNA_methylase_N6_adenine_CS"/>
</dbReference>
<dbReference type="InterPro" id="IPR001091">
    <property type="entry name" value="RM_Methyltransferase"/>
</dbReference>
<dbReference type="InterPro" id="IPR029063">
    <property type="entry name" value="SAM-dependent_MTases_sf"/>
</dbReference>
<dbReference type="PANTHER" id="PTHR13370">
    <property type="entry name" value="RNA METHYLASE-RELATED"/>
    <property type="match status" value="1"/>
</dbReference>
<dbReference type="PANTHER" id="PTHR13370:SF3">
    <property type="entry name" value="TRNA (GUANINE(10)-N2)-METHYLTRANSFERASE HOMOLOG"/>
    <property type="match status" value="1"/>
</dbReference>
<dbReference type="Pfam" id="PF01555">
    <property type="entry name" value="N6_N4_Mtase"/>
    <property type="match status" value="1"/>
</dbReference>
<dbReference type="PRINTS" id="PR00508">
    <property type="entry name" value="S21N4MTFRASE"/>
</dbReference>
<dbReference type="SUPFAM" id="SSF53335">
    <property type="entry name" value="S-adenosyl-L-methionine-dependent methyltransferases"/>
    <property type="match status" value="1"/>
</dbReference>
<dbReference type="PROSITE" id="PS00092">
    <property type="entry name" value="N6_MTASE"/>
    <property type="match status" value="1"/>
</dbReference>
<keyword id="KW-0238">DNA-binding</keyword>
<keyword id="KW-0489">Methyltransferase</keyword>
<keyword id="KW-0680">Restriction system</keyword>
<keyword id="KW-0949">S-adenosyl-L-methionine</keyword>
<keyword id="KW-0808">Transferase</keyword>
<evidence type="ECO:0000269" key="1">
    <source>
    </source>
</evidence>
<evidence type="ECO:0000303" key="2">
    <source>
    </source>
</evidence>
<evidence type="ECO:0000303" key="3">
    <source>
    </source>
</evidence>
<evidence type="ECO:0000305" key="4"/>
<evidence type="ECO:0000305" key="5">
    <source>
    </source>
</evidence>
<reference key="1">
    <citation type="journal article" date="1993" name="Nucleic Acids Res.">
        <title>Gene structure and expression of the MboI restriction-modification system.</title>
        <authorList>
            <person name="Ueno T."/>
            <person name="Ito H."/>
            <person name="Kimizuka F."/>
            <person name="Kotani H."/>
            <person name="Nakajima K."/>
        </authorList>
    </citation>
    <scope>NUCLEOTIDE SEQUENCE [GENOMIC DNA]</scope>
    <scope>FUNCTION</scope>
    <source>
        <strain>ATCC 10900 / DSM 6328 / CIP 70.40 / JCM 17254 / LMG 986 / NCTC 11013</strain>
    </source>
</reference>
<reference key="2">
    <citation type="journal article" date="2003" name="Nucleic Acids Res.">
        <title>A nomenclature for restriction enzymes, DNA methyltransferases, homing endonucleases and their genes.</title>
        <authorList>
            <person name="Roberts R.J."/>
            <person name="Belfort M."/>
            <person name="Bestor T."/>
            <person name="Bhagwat A.S."/>
            <person name="Bickle T.A."/>
            <person name="Bitinaite J."/>
            <person name="Blumenthal R.M."/>
            <person name="Degtyarev S.K."/>
            <person name="Dryden D.T."/>
            <person name="Dybvig K."/>
            <person name="Firman K."/>
            <person name="Gromova E.S."/>
            <person name="Gumport R.I."/>
            <person name="Halford S.E."/>
            <person name="Hattman S."/>
            <person name="Heitman J."/>
            <person name="Hornby D.P."/>
            <person name="Janulaitis A."/>
            <person name="Jeltsch A."/>
            <person name="Josephsen J."/>
            <person name="Kiss A."/>
            <person name="Klaenhammer T.R."/>
            <person name="Kobayashi I."/>
            <person name="Kong H."/>
            <person name="Krueger D.H."/>
            <person name="Lacks S."/>
            <person name="Marinus M.G."/>
            <person name="Miyahara M."/>
            <person name="Morgan R.D."/>
            <person name="Murray N.E."/>
            <person name="Nagaraja V."/>
            <person name="Piekarowicz A."/>
            <person name="Pingoud A."/>
            <person name="Raleigh E."/>
            <person name="Rao D.N."/>
            <person name="Reich N."/>
            <person name="Repin V.E."/>
            <person name="Selker E.U."/>
            <person name="Shaw P.C."/>
            <person name="Stein D.C."/>
            <person name="Stoddard B.L."/>
            <person name="Szybalski W."/>
            <person name="Trautner T.A."/>
            <person name="Van Etten J.L."/>
            <person name="Vitor J.M."/>
            <person name="Wilson G.G."/>
            <person name="Xu S.Y."/>
        </authorList>
    </citation>
    <scope>NOMENCLATURE</scope>
    <scope>SUBTYPE</scope>
</reference>
<comment type="function">
    <text evidence="2 5">A beta subtype methylase that recognizes the double-stranded sequence 5'-GATC-3', methylates A-2 on both strands, and protects the DNA from cleavage by the MboI endonuclease (Probable) (PubMed:12654995). This seems to be a weaker methylase than M1.MboI (Probable).</text>
</comment>
<comment type="catalytic activity">
    <reaction>
        <text>a 2'-deoxyadenosine in DNA + S-adenosyl-L-methionine = an N(6)-methyl-2'-deoxyadenosine in DNA + S-adenosyl-L-homocysteine + H(+)</text>
        <dbReference type="Rhea" id="RHEA:15197"/>
        <dbReference type="Rhea" id="RHEA-COMP:12418"/>
        <dbReference type="Rhea" id="RHEA-COMP:12419"/>
        <dbReference type="ChEBI" id="CHEBI:15378"/>
        <dbReference type="ChEBI" id="CHEBI:57856"/>
        <dbReference type="ChEBI" id="CHEBI:59789"/>
        <dbReference type="ChEBI" id="CHEBI:90615"/>
        <dbReference type="ChEBI" id="CHEBI:90616"/>
        <dbReference type="EC" id="2.1.1.72"/>
    </reaction>
</comment>
<comment type="miscellaneous">
    <text evidence="1">The MboI restriction system has two different methylases.</text>
</comment>
<comment type="similarity">
    <text evidence="4">Belongs to the N(4)/N(6)-methyltransferase family.</text>
</comment>
<proteinExistence type="inferred from homology"/>
<organism>
    <name type="scientific">Moraxella bovis</name>
    <dbReference type="NCBI Taxonomy" id="476"/>
    <lineage>
        <taxon>Bacteria</taxon>
        <taxon>Pseudomonadati</taxon>
        <taxon>Pseudomonadota</taxon>
        <taxon>Gammaproteobacteria</taxon>
        <taxon>Moraxellales</taxon>
        <taxon>Moraxellaceae</taxon>
        <taxon>Moraxella</taxon>
    </lineage>
</organism>
<feature type="chain" id="PRO_0000087956" description="Type II methyltransferase M2.MboI">
    <location>
        <begin position="1"/>
        <end position="273"/>
    </location>
</feature>
<name>MT1B_MORBO</name>
<accession>P34721</accession>